<protein>
    <recommendedName>
        <fullName evidence="1">N-acetylmannosamine kinase</fullName>
        <ecNumber evidence="1">2.7.1.60</ecNumber>
    </recommendedName>
    <alternativeName>
        <fullName evidence="1">ManNAc kinase</fullName>
    </alternativeName>
    <alternativeName>
        <fullName evidence="1">N-acetyl-D-mannosamine kinase</fullName>
    </alternativeName>
</protein>
<accession>B4TJR0</accession>
<evidence type="ECO:0000255" key="1">
    <source>
        <dbReference type="HAMAP-Rule" id="MF_01234"/>
    </source>
</evidence>
<name>NANK_SALHS</name>
<proteinExistence type="inferred from homology"/>
<comment type="function">
    <text evidence="1">Catalyzes the phosphorylation of N-acetylmannosamine (ManNAc) to ManNAc-6-P.</text>
</comment>
<comment type="catalytic activity">
    <reaction evidence="1">
        <text>an N-acyl-D-mannosamine + ATP = an N-acyl-D-mannosamine 6-phosphate + ADP + H(+)</text>
        <dbReference type="Rhea" id="RHEA:23832"/>
        <dbReference type="ChEBI" id="CHEBI:15378"/>
        <dbReference type="ChEBI" id="CHEBI:16062"/>
        <dbReference type="ChEBI" id="CHEBI:30616"/>
        <dbReference type="ChEBI" id="CHEBI:57666"/>
        <dbReference type="ChEBI" id="CHEBI:456216"/>
        <dbReference type="EC" id="2.7.1.60"/>
    </reaction>
</comment>
<comment type="pathway">
    <text evidence="1">Amino-sugar metabolism; N-acetylneuraminate degradation; D-fructose 6-phosphate from N-acetylneuraminate: step 2/5.</text>
</comment>
<comment type="subunit">
    <text evidence="1">Homodimer.</text>
</comment>
<comment type="similarity">
    <text evidence="1">Belongs to the ROK (NagC/XylR) family. NanK subfamily.</text>
</comment>
<gene>
    <name evidence="1" type="primary">nanK</name>
    <name type="ordered locus">SeHA_C3634</name>
</gene>
<feature type="chain" id="PRO_1000139692" description="N-acetylmannosamine kinase">
    <location>
        <begin position="1"/>
        <end position="291"/>
    </location>
</feature>
<feature type="binding site" evidence="1">
    <location>
        <begin position="5"/>
        <end position="12"/>
    </location>
    <ligand>
        <name>ATP</name>
        <dbReference type="ChEBI" id="CHEBI:30616"/>
    </ligand>
</feature>
<feature type="binding site" evidence="1">
    <location>
        <begin position="132"/>
        <end position="139"/>
    </location>
    <ligand>
        <name>ATP</name>
        <dbReference type="ChEBI" id="CHEBI:30616"/>
    </ligand>
</feature>
<feature type="binding site" evidence="1">
    <location>
        <position position="156"/>
    </location>
    <ligand>
        <name>Zn(2+)</name>
        <dbReference type="ChEBI" id="CHEBI:29105"/>
    </ligand>
</feature>
<feature type="binding site" evidence="1">
    <location>
        <position position="166"/>
    </location>
    <ligand>
        <name>Zn(2+)</name>
        <dbReference type="ChEBI" id="CHEBI:29105"/>
    </ligand>
</feature>
<feature type="binding site" evidence="1">
    <location>
        <position position="168"/>
    </location>
    <ligand>
        <name>Zn(2+)</name>
        <dbReference type="ChEBI" id="CHEBI:29105"/>
    </ligand>
</feature>
<feature type="binding site" evidence="1">
    <location>
        <position position="173"/>
    </location>
    <ligand>
        <name>Zn(2+)</name>
        <dbReference type="ChEBI" id="CHEBI:29105"/>
    </ligand>
</feature>
<dbReference type="EC" id="2.7.1.60" evidence="1"/>
<dbReference type="EMBL" id="CP001120">
    <property type="protein sequence ID" value="ACF69063.1"/>
    <property type="molecule type" value="Genomic_DNA"/>
</dbReference>
<dbReference type="RefSeq" id="WP_000208971.1">
    <property type="nucleotide sequence ID" value="NC_011083.1"/>
</dbReference>
<dbReference type="SMR" id="B4TJR0"/>
<dbReference type="KEGG" id="seh:SeHA_C3634"/>
<dbReference type="HOGENOM" id="CLU_036604_0_4_6"/>
<dbReference type="UniPathway" id="UPA00629">
    <property type="reaction ID" value="UER00681"/>
</dbReference>
<dbReference type="Proteomes" id="UP000001866">
    <property type="component" value="Chromosome"/>
</dbReference>
<dbReference type="GO" id="GO:0005524">
    <property type="term" value="F:ATP binding"/>
    <property type="evidence" value="ECO:0007669"/>
    <property type="project" value="UniProtKB-UniRule"/>
</dbReference>
<dbReference type="GO" id="GO:0009384">
    <property type="term" value="F:N-acylmannosamine kinase activity"/>
    <property type="evidence" value="ECO:0007669"/>
    <property type="project" value="UniProtKB-UniRule"/>
</dbReference>
<dbReference type="GO" id="GO:0008270">
    <property type="term" value="F:zinc ion binding"/>
    <property type="evidence" value="ECO:0007669"/>
    <property type="project" value="UniProtKB-UniRule"/>
</dbReference>
<dbReference type="GO" id="GO:0019262">
    <property type="term" value="P:N-acetylneuraminate catabolic process"/>
    <property type="evidence" value="ECO:0007669"/>
    <property type="project" value="UniProtKB-UniRule"/>
</dbReference>
<dbReference type="FunFam" id="3.30.420.40:FF:000062">
    <property type="entry name" value="N-acetylmannosamine kinase"/>
    <property type="match status" value="1"/>
</dbReference>
<dbReference type="FunFam" id="3.30.420.40:FF:000063">
    <property type="entry name" value="N-acetylmannosamine kinase"/>
    <property type="match status" value="1"/>
</dbReference>
<dbReference type="Gene3D" id="3.30.420.40">
    <property type="match status" value="2"/>
</dbReference>
<dbReference type="HAMAP" id="MF_01234">
    <property type="entry name" value="ManNAc_kinase"/>
    <property type="match status" value="1"/>
</dbReference>
<dbReference type="InterPro" id="IPR043129">
    <property type="entry name" value="ATPase_NBD"/>
</dbReference>
<dbReference type="InterPro" id="IPR023945">
    <property type="entry name" value="ManNAc_kinase_bac"/>
</dbReference>
<dbReference type="InterPro" id="IPR000600">
    <property type="entry name" value="ROK"/>
</dbReference>
<dbReference type="InterPro" id="IPR049874">
    <property type="entry name" value="ROK_cs"/>
</dbReference>
<dbReference type="NCBIfam" id="NF047821">
    <property type="entry name" value="NactlManKinNanK"/>
    <property type="match status" value="1"/>
</dbReference>
<dbReference type="NCBIfam" id="NF003461">
    <property type="entry name" value="PRK05082.1"/>
    <property type="match status" value="1"/>
</dbReference>
<dbReference type="PANTHER" id="PTHR18964:SF169">
    <property type="entry name" value="N-ACETYLMANNOSAMINE KINASE"/>
    <property type="match status" value="1"/>
</dbReference>
<dbReference type="PANTHER" id="PTHR18964">
    <property type="entry name" value="ROK (REPRESSOR, ORF, KINASE) FAMILY"/>
    <property type="match status" value="1"/>
</dbReference>
<dbReference type="Pfam" id="PF00480">
    <property type="entry name" value="ROK"/>
    <property type="match status" value="1"/>
</dbReference>
<dbReference type="SUPFAM" id="SSF53067">
    <property type="entry name" value="Actin-like ATPase domain"/>
    <property type="match status" value="1"/>
</dbReference>
<dbReference type="PROSITE" id="PS01125">
    <property type="entry name" value="ROK"/>
    <property type="match status" value="1"/>
</dbReference>
<sequence length="291" mass="30150">MTTLAIDIGGTKLAAALIDKNLRISQRRELPTPASKTPDALREALKALVEPLRAEARQVAIASTGIIQEGMLLALNPHNLGGLLHFPLVQTLETIAGLPTLAVNDAQAAAWAEYHALPDDIRDMVFITVSTGVGGGVVCDGKLLTGKGGLAGHLGHTLADPHGPVCGCGRVGCVEAIASGRGMAAAARDDLAGCDAKTLFIRAGEGHQQARHLVSQSAQVIARMIADVKATTDCQCVVIGGSVGLAEGYLEQVRAFLMQEPVPYHVALSAARYRHDAGLLGAALLAQGDTL</sequence>
<reference key="1">
    <citation type="journal article" date="2011" name="J. Bacteriol.">
        <title>Comparative genomics of 28 Salmonella enterica isolates: evidence for CRISPR-mediated adaptive sublineage evolution.</title>
        <authorList>
            <person name="Fricke W.F."/>
            <person name="Mammel M.K."/>
            <person name="McDermott P.F."/>
            <person name="Tartera C."/>
            <person name="White D.G."/>
            <person name="Leclerc J.E."/>
            <person name="Ravel J."/>
            <person name="Cebula T.A."/>
        </authorList>
    </citation>
    <scope>NUCLEOTIDE SEQUENCE [LARGE SCALE GENOMIC DNA]</scope>
    <source>
        <strain>SL476</strain>
    </source>
</reference>
<organism>
    <name type="scientific">Salmonella heidelberg (strain SL476)</name>
    <dbReference type="NCBI Taxonomy" id="454169"/>
    <lineage>
        <taxon>Bacteria</taxon>
        <taxon>Pseudomonadati</taxon>
        <taxon>Pseudomonadota</taxon>
        <taxon>Gammaproteobacteria</taxon>
        <taxon>Enterobacterales</taxon>
        <taxon>Enterobacteriaceae</taxon>
        <taxon>Salmonella</taxon>
    </lineage>
</organism>
<keyword id="KW-0067">ATP-binding</keyword>
<keyword id="KW-0119">Carbohydrate metabolism</keyword>
<keyword id="KW-0418">Kinase</keyword>
<keyword id="KW-0479">Metal-binding</keyword>
<keyword id="KW-0547">Nucleotide-binding</keyword>
<keyword id="KW-0808">Transferase</keyword>
<keyword id="KW-0862">Zinc</keyword>